<evidence type="ECO:0000250" key="1"/>
<evidence type="ECO:0000255" key="2">
    <source>
        <dbReference type="HAMAP-Rule" id="MF_01317"/>
    </source>
</evidence>
<organism>
    <name type="scientific">Lotus japonicus</name>
    <name type="common">Lotus corniculatus var. japonicus</name>
    <dbReference type="NCBI Taxonomy" id="34305"/>
    <lineage>
        <taxon>Eukaryota</taxon>
        <taxon>Viridiplantae</taxon>
        <taxon>Streptophyta</taxon>
        <taxon>Embryophyta</taxon>
        <taxon>Tracheophyta</taxon>
        <taxon>Spermatophyta</taxon>
        <taxon>Magnoliopsida</taxon>
        <taxon>eudicotyledons</taxon>
        <taxon>Gunneridae</taxon>
        <taxon>Pentapetalae</taxon>
        <taxon>rosids</taxon>
        <taxon>fabids</taxon>
        <taxon>Fabales</taxon>
        <taxon>Fabaceae</taxon>
        <taxon>Papilionoideae</taxon>
        <taxon>50 kb inversion clade</taxon>
        <taxon>NPAAA clade</taxon>
        <taxon>Hologalegina</taxon>
        <taxon>robinioid clade</taxon>
        <taxon>Loteae</taxon>
        <taxon>Lotus</taxon>
    </lineage>
</organism>
<feature type="chain" id="PRO_0000219736" description="Photosystem II reaction center protein L">
    <location>
        <begin position="1"/>
        <end position="38"/>
    </location>
</feature>
<feature type="transmembrane region" description="Helical" evidence="2">
    <location>
        <begin position="17"/>
        <end position="37"/>
    </location>
</feature>
<sequence length="38" mass="4470">MTQSNPNEQSVELNRTSLYWGLLLIFVLAVLFSNYFFN</sequence>
<keyword id="KW-0150">Chloroplast</keyword>
<keyword id="KW-0472">Membrane</keyword>
<keyword id="KW-0602">Photosynthesis</keyword>
<keyword id="KW-0604">Photosystem II</keyword>
<keyword id="KW-0934">Plastid</keyword>
<keyword id="KW-0674">Reaction center</keyword>
<keyword id="KW-0691">RNA editing</keyword>
<keyword id="KW-0793">Thylakoid</keyword>
<keyword id="KW-0812">Transmembrane</keyword>
<keyword id="KW-1133">Transmembrane helix</keyword>
<gene>
    <name evidence="2" type="primary">psbL</name>
</gene>
<protein>
    <recommendedName>
        <fullName evidence="2">Photosystem II reaction center protein L</fullName>
        <shortName evidence="2">PSII-L</shortName>
    </recommendedName>
</protein>
<comment type="function">
    <text evidence="2">One of the components of the core complex of photosystem II (PSII). PSII is a light-driven water:plastoquinone oxidoreductase that uses light energy to abstract electrons from H(2)O, generating O(2) and a proton gradient subsequently used for ATP formation. It consists of a core antenna complex that captures photons, and an electron transfer chain that converts photonic excitation into a charge separation. This subunit is found at the monomer-monomer interface and is required for correct PSII assembly and/or dimerization.</text>
</comment>
<comment type="subunit">
    <text evidence="2">PSII is composed of 1 copy each of membrane proteins PsbA, PsbB, PsbC, PsbD, PsbE, PsbF, PsbH, PsbI, PsbJ, PsbK, PsbL, PsbM, PsbT, PsbX, PsbY, PsbZ, Psb30/Ycf12, at least 3 peripheral proteins of the oxygen-evolving complex and a large number of cofactors. It forms dimeric complexes.</text>
</comment>
<comment type="subcellular location">
    <subcellularLocation>
        <location evidence="2">Plastid</location>
        <location evidence="2">Chloroplast thylakoid membrane</location>
        <topology evidence="2">Single-pass membrane protein</topology>
    </subcellularLocation>
</comment>
<comment type="RNA editing">
    <location>
        <position position="1" evidence="1"/>
    </location>
    <text evidence="1">The initiator methionine is created by RNA editing.</text>
</comment>
<comment type="similarity">
    <text evidence="2">Belongs to the PsbL family.</text>
</comment>
<proteinExistence type="inferred from homology"/>
<reference key="1">
    <citation type="journal article" date="2000" name="DNA Res.">
        <title>Complete structure of the chloroplast genome of a legume, Lotus japonicus.</title>
        <authorList>
            <person name="Kato T."/>
            <person name="Kaneko T."/>
            <person name="Sato S."/>
            <person name="Nakamura Y."/>
            <person name="Tabata S."/>
        </authorList>
    </citation>
    <scope>NUCLEOTIDE SEQUENCE [LARGE SCALE GENOMIC DNA]</scope>
    <source>
        <strain>cv. Miyakojima MG-20</strain>
    </source>
</reference>
<geneLocation type="chloroplast"/>
<name>PSBL_LOTJA</name>
<dbReference type="EMBL" id="AP002983">
    <property type="protein sequence ID" value="BAB33211.1"/>
    <property type="molecule type" value="Genomic_DNA"/>
</dbReference>
<dbReference type="RefSeq" id="NP_084813.1">
    <property type="nucleotide sequence ID" value="NC_002694.1"/>
</dbReference>
<dbReference type="SMR" id="P60135"/>
<dbReference type="GeneID" id="802925"/>
<dbReference type="GO" id="GO:0009535">
    <property type="term" value="C:chloroplast thylakoid membrane"/>
    <property type="evidence" value="ECO:0007669"/>
    <property type="project" value="UniProtKB-SubCell"/>
</dbReference>
<dbReference type="GO" id="GO:0009539">
    <property type="term" value="C:photosystem II reaction center"/>
    <property type="evidence" value="ECO:0007669"/>
    <property type="project" value="InterPro"/>
</dbReference>
<dbReference type="GO" id="GO:0015979">
    <property type="term" value="P:photosynthesis"/>
    <property type="evidence" value="ECO:0007669"/>
    <property type="project" value="UniProtKB-UniRule"/>
</dbReference>
<dbReference type="HAMAP" id="MF_01317">
    <property type="entry name" value="PSII_PsbL"/>
    <property type="match status" value="1"/>
</dbReference>
<dbReference type="InterPro" id="IPR003372">
    <property type="entry name" value="PSII_PsbL"/>
</dbReference>
<dbReference type="InterPro" id="IPR037266">
    <property type="entry name" value="PSII_PsbL_sf"/>
</dbReference>
<dbReference type="NCBIfam" id="NF001972">
    <property type="entry name" value="PRK00753.1"/>
    <property type="match status" value="1"/>
</dbReference>
<dbReference type="Pfam" id="PF02419">
    <property type="entry name" value="PsbL"/>
    <property type="match status" value="1"/>
</dbReference>
<dbReference type="SUPFAM" id="SSF161017">
    <property type="entry name" value="Photosystem II reaction center protein L, PsbL"/>
    <property type="match status" value="1"/>
</dbReference>
<accession>P60135</accession>
<accession>P29301</accession>